<evidence type="ECO:0000250" key="1">
    <source>
        <dbReference type="UniProtKB" id="A5K9S0"/>
    </source>
</evidence>
<evidence type="ECO:0000250" key="2">
    <source>
        <dbReference type="UniProtKB" id="Q9Y285"/>
    </source>
</evidence>
<evidence type="ECO:0000269" key="3">
    <source>
    </source>
</evidence>
<evidence type="ECO:0000305" key="4"/>
<evidence type="ECO:0000305" key="5">
    <source>
    </source>
</evidence>
<name>SYFA_YEAST</name>
<comment type="catalytic activity">
    <reaction>
        <text>tRNA(Phe) + L-phenylalanine + ATP = L-phenylalanyl-tRNA(Phe) + AMP + diphosphate + H(+)</text>
        <dbReference type="Rhea" id="RHEA:19413"/>
        <dbReference type="Rhea" id="RHEA-COMP:9668"/>
        <dbReference type="Rhea" id="RHEA-COMP:9699"/>
        <dbReference type="ChEBI" id="CHEBI:15378"/>
        <dbReference type="ChEBI" id="CHEBI:30616"/>
        <dbReference type="ChEBI" id="CHEBI:33019"/>
        <dbReference type="ChEBI" id="CHEBI:58095"/>
        <dbReference type="ChEBI" id="CHEBI:78442"/>
        <dbReference type="ChEBI" id="CHEBI:78531"/>
        <dbReference type="ChEBI" id="CHEBI:456215"/>
        <dbReference type="EC" id="6.1.1.20"/>
    </reaction>
</comment>
<comment type="cofactor">
    <cofactor evidence="1">
        <name>Mg(2+)</name>
        <dbReference type="ChEBI" id="CHEBI:18420"/>
    </cofactor>
</comment>
<comment type="subunit">
    <text>Tetramer of two alpha and two beta subunits.</text>
</comment>
<comment type="interaction">
    <interactant intactId="EBI-18678">
        <id>P15625</id>
    </interactant>
    <interactant intactId="EBI-18684">
        <id>P15624</id>
        <label>FRS1</label>
    </interactant>
    <organismsDiffer>false</organismsDiffer>
    <experiments>3</experiments>
</comment>
<comment type="subcellular location">
    <subcellularLocation>
        <location>Cytoplasm</location>
    </subcellularLocation>
</comment>
<comment type="similarity">
    <text evidence="4">Belongs to the class-II aminoacyl-tRNA synthetase family. Phe-tRNA synthetase alpha subunit type 2 subfamily.</text>
</comment>
<comment type="caution">
    <text evidence="5">Was originally erroneously assigned as a beta subunit.</text>
</comment>
<keyword id="KW-0007">Acetylation</keyword>
<keyword id="KW-0030">Aminoacyl-tRNA synthetase</keyword>
<keyword id="KW-0067">ATP-binding</keyword>
<keyword id="KW-0963">Cytoplasm</keyword>
<keyword id="KW-0903">Direct protein sequencing</keyword>
<keyword id="KW-0436">Ligase</keyword>
<keyword id="KW-0460">Magnesium</keyword>
<keyword id="KW-0479">Metal-binding</keyword>
<keyword id="KW-0547">Nucleotide-binding</keyword>
<keyword id="KW-0648">Protein biosynthesis</keyword>
<keyword id="KW-1185">Reference proteome</keyword>
<protein>
    <recommendedName>
        <fullName>Phenylalanine--tRNA ligase alpha subunit</fullName>
        <ecNumber>6.1.1.20</ecNumber>
    </recommendedName>
    <alternativeName>
        <fullName>Phenylalanyl-tRNA synthetase alpha subunit</fullName>
        <shortName>PheRS</shortName>
    </alternativeName>
</protein>
<reference key="1">
    <citation type="journal article" date="1988" name="J. Biol. Chem.">
        <title>Structure and expression of the genes encoding the alpha and beta subunits of yeast phenylalanyl-tRNA synthetase.</title>
        <authorList>
            <person name="Sanni A."/>
            <person name="Mirande M."/>
            <person name="Ebel J.-P."/>
            <person name="Boulanger Y."/>
            <person name="Waller J.-P."/>
            <person name="Fasiolo F."/>
        </authorList>
    </citation>
    <scope>NUCLEOTIDE SEQUENCE [GENOMIC DNA]</scope>
    <scope>PARTIAL PROTEIN SEQUENCE</scope>
</reference>
<reference key="2">
    <citation type="journal article" date="1995" name="Nat. Genet.">
        <title>Analysis of the nucleotide sequence of chromosome VI from Saccharomyces cerevisiae.</title>
        <authorList>
            <person name="Murakami Y."/>
            <person name="Naitou M."/>
            <person name="Hagiwara H."/>
            <person name="Shibata T."/>
            <person name="Ozawa M."/>
            <person name="Sasanuma S."/>
            <person name="Sasanuma M."/>
            <person name="Tsuchiya Y."/>
            <person name="Soeda E."/>
            <person name="Yokoyama K."/>
            <person name="Yamazaki M."/>
            <person name="Tashiro H."/>
            <person name="Eki T."/>
        </authorList>
    </citation>
    <scope>NUCLEOTIDE SEQUENCE [LARGE SCALE GENOMIC DNA]</scope>
    <source>
        <strain>ATCC 204508 / S288c</strain>
    </source>
</reference>
<reference key="3">
    <citation type="journal article" date="2014" name="G3 (Bethesda)">
        <title>The reference genome sequence of Saccharomyces cerevisiae: Then and now.</title>
        <authorList>
            <person name="Engel S.R."/>
            <person name="Dietrich F.S."/>
            <person name="Fisk D.G."/>
            <person name="Binkley G."/>
            <person name="Balakrishnan R."/>
            <person name="Costanzo M.C."/>
            <person name="Dwight S.S."/>
            <person name="Hitz B.C."/>
            <person name="Karra K."/>
            <person name="Nash R.S."/>
            <person name="Weng S."/>
            <person name="Wong E.D."/>
            <person name="Lloyd P."/>
            <person name="Skrzypek M.S."/>
            <person name="Miyasato S.R."/>
            <person name="Simison M."/>
            <person name="Cherry J.M."/>
        </authorList>
    </citation>
    <scope>GENOME REANNOTATION</scope>
    <source>
        <strain>ATCC 204508 / S288c</strain>
    </source>
</reference>
<reference key="4">
    <citation type="journal article" date="1989" name="FEBS Lett.">
        <title>Identification of the major tRNA(Phe) binding domain in the tetrameric structure of cytoplasmic phenylalanyl-tRNA synthetase from baker's yeast.</title>
        <authorList>
            <person name="Fasiolo F."/>
            <person name="Sanni A."/>
            <person name="Potier S."/>
            <person name="Ebel J.-P."/>
            <person name="Boulanger Y."/>
        </authorList>
    </citation>
    <scope>PARTIAL PROTEIN SEQUENCE</scope>
    <scope>DOMAIN TRNA-BINDING</scope>
</reference>
<reference key="5">
    <citation type="journal article" date="1997" name="Electrophoresis">
        <title>Proteome studies of Saccharomyces cerevisiae: identification and characterization of abundant proteins.</title>
        <authorList>
            <person name="Garrels J.I."/>
            <person name="McLaughlin C.S."/>
            <person name="Warner J.R."/>
            <person name="Futcher B."/>
            <person name="Latter G.I."/>
            <person name="Kobayashi R."/>
            <person name="Schwender B."/>
            <person name="Volpe T."/>
            <person name="Anderson D.S."/>
            <person name="Mesquita-Fuentes R."/>
            <person name="Payne W.E."/>
        </authorList>
    </citation>
    <scope>ACETYLATION AT SER-2</scope>
</reference>
<feature type="initiator methionine" description="Removed" evidence="3">
    <location>
        <position position="1"/>
    </location>
</feature>
<feature type="chain" id="PRO_0000126828" description="Phenylalanine--tRNA ligase alpha subunit">
    <location>
        <begin position="2"/>
        <end position="503"/>
    </location>
</feature>
<feature type="region of interest" description="Contains the major tRNA-Phe binding sites">
    <location>
        <begin position="2"/>
        <end position="173"/>
    </location>
</feature>
<feature type="binding site" evidence="2">
    <location>
        <position position="333"/>
    </location>
    <ligand>
        <name>L-phenylalanine</name>
        <dbReference type="ChEBI" id="CHEBI:58095"/>
    </ligand>
</feature>
<feature type="binding site" evidence="2">
    <location>
        <begin position="374"/>
        <end position="376"/>
    </location>
    <ligand>
        <name>L-phenylalanine</name>
        <dbReference type="ChEBI" id="CHEBI:58095"/>
    </ligand>
</feature>
<feature type="binding site" evidence="2">
    <location>
        <position position="414"/>
    </location>
    <ligand>
        <name>L-phenylalanine</name>
        <dbReference type="ChEBI" id="CHEBI:58095"/>
    </ligand>
</feature>
<feature type="binding site" evidence="1">
    <location>
        <position position="416"/>
    </location>
    <ligand>
        <name>Mg(2+)</name>
        <dbReference type="ChEBI" id="CHEBI:18420"/>
        <note>ligand shared with heterodimeric partner</note>
    </ligand>
</feature>
<feature type="binding site" evidence="2">
    <location>
        <position position="440"/>
    </location>
    <ligand>
        <name>L-phenylalanine</name>
        <dbReference type="ChEBI" id="CHEBI:58095"/>
    </ligand>
</feature>
<feature type="modified residue" description="N-acetylserine" evidence="3">
    <location>
        <position position="2"/>
    </location>
</feature>
<feature type="sequence conflict" description="In Ref. 1; AAA35152." evidence="4" ref="1">
    <original>N</original>
    <variation>S</variation>
    <location>
        <position position="177"/>
    </location>
</feature>
<feature type="sequence conflict" description="In Ref. 1; AAA35152." evidence="4" ref="1">
    <original>D</original>
    <variation>E</variation>
    <location>
        <position position="289"/>
    </location>
</feature>
<sequence>MSDFQLEILKKLDELDEIKSTLATFPQHGSQDVLSALNSLKAHNKLEFSKVDTVTYDLTKEGAQILNEGSYEIKLVKLIQELGQLQIKDVMSKLGPQVGKVGQARAFKNGWIAKNASNELELSAKLQNTDLNELTDETQSILAQIKNNSHLDSIDAKILNDLKKRKLIAQGKITDFNVTKGPEFSTDLTKLETDLTSDMVSTNAYKDLKFKPYNFNSQGVQISSGALHPLNKVREEFRQIFFSMGFTEMPSNQYVETGFWNFDALYVPQQHPARDLQDTFYIKDPLTADLPDDKTYMDNIKAVHEQGRFGSIGYRYNWKPEECQKLVLRTHSTAISARMLHDLAKDPKPTRLFSIDRVFRNEAVDATHLAEFHQVEGVLADYNITLGDLIKFMEEFFERMGVTGLRFKPTYNPYTEPSMEIFSWHEGLQKWVEIGNSGMFRPEMLESMGLPKDLRVLGWGLSLERPTMIKYKVQNIRELLGHKVSLDFIETNPAARLDEDLYE</sequence>
<organism>
    <name type="scientific">Saccharomyces cerevisiae (strain ATCC 204508 / S288c)</name>
    <name type="common">Baker's yeast</name>
    <dbReference type="NCBI Taxonomy" id="559292"/>
    <lineage>
        <taxon>Eukaryota</taxon>
        <taxon>Fungi</taxon>
        <taxon>Dikarya</taxon>
        <taxon>Ascomycota</taxon>
        <taxon>Saccharomycotina</taxon>
        <taxon>Saccharomycetes</taxon>
        <taxon>Saccharomycetales</taxon>
        <taxon>Saccharomycetaceae</taxon>
        <taxon>Saccharomyces</taxon>
    </lineage>
</organism>
<dbReference type="EC" id="6.1.1.20"/>
<dbReference type="EMBL" id="J03965">
    <property type="protein sequence ID" value="AAA35152.1"/>
    <property type="molecule type" value="Genomic_DNA"/>
</dbReference>
<dbReference type="EMBL" id="D50617">
    <property type="protein sequence ID" value="BAA09216.1"/>
    <property type="molecule type" value="Genomic_DNA"/>
</dbReference>
<dbReference type="EMBL" id="BK006940">
    <property type="protein sequence ID" value="DAA12418.1"/>
    <property type="molecule type" value="Genomic_DNA"/>
</dbReference>
<dbReference type="PIR" id="S56232">
    <property type="entry name" value="YFBYAC"/>
</dbReference>
<dbReference type="RefSeq" id="NP_116631.1">
    <property type="nucleotide sequence ID" value="NM_001179944.2"/>
</dbReference>
<dbReference type="SMR" id="P15625"/>
<dbReference type="BioGRID" id="31124">
    <property type="interactions" value="124"/>
</dbReference>
<dbReference type="ComplexPortal" id="CPX-1738">
    <property type="entry name" value="Phenylalanyl-tRNA synthetase complex"/>
</dbReference>
<dbReference type="DIP" id="DIP-5428N"/>
<dbReference type="FunCoup" id="P15625">
    <property type="interactions" value="1273"/>
</dbReference>
<dbReference type="IntAct" id="P15625">
    <property type="interactions" value="12"/>
</dbReference>
<dbReference type="MINT" id="P15625"/>
<dbReference type="STRING" id="4932.YFL022C"/>
<dbReference type="iPTMnet" id="P15625"/>
<dbReference type="PaxDb" id="4932-YFL022C"/>
<dbReference type="PeptideAtlas" id="P15625"/>
<dbReference type="TopDownProteomics" id="P15625"/>
<dbReference type="EnsemblFungi" id="YFL022C_mRNA">
    <property type="protein sequence ID" value="YFL022C"/>
    <property type="gene ID" value="YFL022C"/>
</dbReference>
<dbReference type="GeneID" id="850522"/>
<dbReference type="KEGG" id="sce:YFL022C"/>
<dbReference type="AGR" id="SGD:S000001872"/>
<dbReference type="SGD" id="S000001872">
    <property type="gene designation" value="FRS2"/>
</dbReference>
<dbReference type="VEuPathDB" id="FungiDB:YFL022C"/>
<dbReference type="eggNOG" id="KOG2784">
    <property type="taxonomic scope" value="Eukaryota"/>
</dbReference>
<dbReference type="GeneTree" id="ENSGT00390000006387"/>
<dbReference type="HOGENOM" id="CLU_025086_2_0_1"/>
<dbReference type="InParanoid" id="P15625"/>
<dbReference type="OMA" id="QIEGWVM"/>
<dbReference type="OrthoDB" id="238316at2759"/>
<dbReference type="BioCyc" id="YEAST:G3O-30438-MONOMER"/>
<dbReference type="BioGRID-ORCS" id="850522">
    <property type="hits" value="6 hits in 10 CRISPR screens"/>
</dbReference>
<dbReference type="PRO" id="PR:P15625"/>
<dbReference type="Proteomes" id="UP000002311">
    <property type="component" value="Chromosome VI"/>
</dbReference>
<dbReference type="RNAct" id="P15625">
    <property type="molecule type" value="protein"/>
</dbReference>
<dbReference type="GO" id="GO:0005737">
    <property type="term" value="C:cytoplasm"/>
    <property type="evidence" value="ECO:0007005"/>
    <property type="project" value="SGD"/>
</dbReference>
<dbReference type="GO" id="GO:0009328">
    <property type="term" value="C:phenylalanine-tRNA ligase complex"/>
    <property type="evidence" value="ECO:0000314"/>
    <property type="project" value="ComplexPortal"/>
</dbReference>
<dbReference type="GO" id="GO:0002161">
    <property type="term" value="F:aminoacyl-tRNA deacylase activity"/>
    <property type="evidence" value="ECO:0000315"/>
    <property type="project" value="SGD"/>
</dbReference>
<dbReference type="GO" id="GO:0005524">
    <property type="term" value="F:ATP binding"/>
    <property type="evidence" value="ECO:0007669"/>
    <property type="project" value="UniProtKB-KW"/>
</dbReference>
<dbReference type="GO" id="GO:0000287">
    <property type="term" value="F:magnesium ion binding"/>
    <property type="evidence" value="ECO:0000250"/>
    <property type="project" value="UniProtKB"/>
</dbReference>
<dbReference type="GO" id="GO:0004826">
    <property type="term" value="F:phenylalanine-tRNA ligase activity"/>
    <property type="evidence" value="ECO:0007669"/>
    <property type="project" value="UniProtKB-EC"/>
</dbReference>
<dbReference type="GO" id="GO:0000049">
    <property type="term" value="F:tRNA binding"/>
    <property type="evidence" value="ECO:0007669"/>
    <property type="project" value="InterPro"/>
</dbReference>
<dbReference type="GO" id="GO:0006432">
    <property type="term" value="P:phenylalanyl-tRNA aminoacylation"/>
    <property type="evidence" value="ECO:0000314"/>
    <property type="project" value="SGD"/>
</dbReference>
<dbReference type="CDD" id="cd00496">
    <property type="entry name" value="PheRS_alpha_core"/>
    <property type="match status" value="1"/>
</dbReference>
<dbReference type="FunFam" id="1.10.10.2320:FF:000001">
    <property type="entry name" value="phenylalanine--tRNA ligase alpha subunit"/>
    <property type="match status" value="1"/>
</dbReference>
<dbReference type="FunFam" id="1.10.10.2330:FF:000002">
    <property type="entry name" value="Phenylalanyl-tRNA synthetase alpha chain"/>
    <property type="match status" value="1"/>
</dbReference>
<dbReference type="FunFam" id="3.30.930.10:FF:000028">
    <property type="entry name" value="Phenylalanyl-tRNA synthetase alpha chain"/>
    <property type="match status" value="1"/>
</dbReference>
<dbReference type="Gene3D" id="1.10.10.2320">
    <property type="match status" value="1"/>
</dbReference>
<dbReference type="Gene3D" id="1.10.10.2330">
    <property type="match status" value="1"/>
</dbReference>
<dbReference type="Gene3D" id="3.30.1370.240">
    <property type="match status" value="1"/>
</dbReference>
<dbReference type="Gene3D" id="3.30.930.10">
    <property type="entry name" value="Bira Bifunctional Protein, Domain 2"/>
    <property type="match status" value="1"/>
</dbReference>
<dbReference type="InterPro" id="IPR006195">
    <property type="entry name" value="aa-tRNA-synth_II"/>
</dbReference>
<dbReference type="InterPro" id="IPR045864">
    <property type="entry name" value="aa-tRNA-synth_II/BPL/LPL"/>
</dbReference>
<dbReference type="InterPro" id="IPR004529">
    <property type="entry name" value="Phe-tRNA-synth_IIc_asu"/>
</dbReference>
<dbReference type="InterPro" id="IPR002319">
    <property type="entry name" value="Phenylalanyl-tRNA_Synthase"/>
</dbReference>
<dbReference type="InterPro" id="IPR040586">
    <property type="entry name" value="PheRS_DBD2"/>
</dbReference>
<dbReference type="InterPro" id="IPR040725">
    <property type="entry name" value="PheRS_DBD3"/>
</dbReference>
<dbReference type="NCBIfam" id="TIGR00468">
    <property type="entry name" value="pheS"/>
    <property type="match status" value="1"/>
</dbReference>
<dbReference type="NCBIfam" id="NF003210">
    <property type="entry name" value="PRK04172.1"/>
    <property type="match status" value="1"/>
</dbReference>
<dbReference type="PANTHER" id="PTHR11538:SF40">
    <property type="entry name" value="PHENYLALANINE--TRNA LIGASE ALPHA SUBUNIT"/>
    <property type="match status" value="1"/>
</dbReference>
<dbReference type="PANTHER" id="PTHR11538">
    <property type="entry name" value="PHENYLALANYL-TRNA SYNTHETASE"/>
    <property type="match status" value="1"/>
</dbReference>
<dbReference type="Pfam" id="PF18554">
    <property type="entry name" value="PheRS_DBD2"/>
    <property type="match status" value="1"/>
</dbReference>
<dbReference type="Pfam" id="PF18553">
    <property type="entry name" value="PheRS_DBD3"/>
    <property type="match status" value="1"/>
</dbReference>
<dbReference type="Pfam" id="PF01409">
    <property type="entry name" value="tRNA-synt_2d"/>
    <property type="match status" value="1"/>
</dbReference>
<dbReference type="SUPFAM" id="SSF55681">
    <property type="entry name" value="Class II aaRS and biotin synthetases"/>
    <property type="match status" value="1"/>
</dbReference>
<dbReference type="PROSITE" id="PS50862">
    <property type="entry name" value="AA_TRNA_LIGASE_II"/>
    <property type="match status" value="1"/>
</dbReference>
<accession>P15625</accession>
<accession>D6VTK8</accession>
<gene>
    <name type="primary">FRS2</name>
    <name type="ordered locus">YFL022C</name>
</gene>
<proteinExistence type="evidence at protein level"/>